<keyword id="KW-0963">Cytoplasm</keyword>
<keyword id="KW-0251">Elongation factor</keyword>
<keyword id="KW-0379">Hydroxylation</keyword>
<keyword id="KW-0648">Protein biosynthesis</keyword>
<keyword id="KW-1185">Reference proteome</keyword>
<accession>B4EXC9</accession>
<name>EFP_PROMH</name>
<organism>
    <name type="scientific">Proteus mirabilis (strain HI4320)</name>
    <dbReference type="NCBI Taxonomy" id="529507"/>
    <lineage>
        <taxon>Bacteria</taxon>
        <taxon>Pseudomonadati</taxon>
        <taxon>Pseudomonadota</taxon>
        <taxon>Gammaproteobacteria</taxon>
        <taxon>Enterobacterales</taxon>
        <taxon>Morganellaceae</taxon>
        <taxon>Proteus</taxon>
    </lineage>
</organism>
<comment type="function">
    <text evidence="1">Involved in peptide bond synthesis. Alleviates ribosome stalling that occurs when 3 or more consecutive Pro residues or the sequence PPG is present in a protein, possibly by augmenting the peptidyl transferase activity of the ribosome. Modification of Lys-34 is required for alleviation.</text>
</comment>
<comment type="pathway">
    <text evidence="1">Protein biosynthesis; polypeptide chain elongation.</text>
</comment>
<comment type="subcellular location">
    <subcellularLocation>
        <location evidence="1">Cytoplasm</location>
    </subcellularLocation>
</comment>
<comment type="PTM">
    <text evidence="1">May be beta-lysylated on the epsilon-amino group of Lys-34 by the combined action of EpmA and EpmB, and then hydroxylated on the C5 position of the same residue by EpmC (if this protein is present). Lysylation is critical for the stimulatory effect of EF-P on peptide-bond formation. The lysylation moiety may extend toward the peptidyltransferase center and stabilize the terminal 3-CCA end of the tRNA. Hydroxylation of the C5 position on Lys-34 may allow additional potential stabilizing hydrogen-bond interactions with the P-tRNA.</text>
</comment>
<comment type="similarity">
    <text evidence="1">Belongs to the elongation factor P family.</text>
</comment>
<proteinExistence type="inferred from homology"/>
<protein>
    <recommendedName>
        <fullName evidence="1">Elongation factor P</fullName>
        <shortName evidence="1">EF-P</shortName>
    </recommendedName>
</protein>
<dbReference type="EMBL" id="AM942759">
    <property type="protein sequence ID" value="CAR45005.1"/>
    <property type="molecule type" value="Genomic_DNA"/>
</dbReference>
<dbReference type="RefSeq" id="WP_004245698.1">
    <property type="nucleotide sequence ID" value="NC_010554.1"/>
</dbReference>
<dbReference type="SMR" id="B4EXC9"/>
<dbReference type="EnsemblBacteria" id="CAR45005">
    <property type="protein sequence ID" value="CAR45005"/>
    <property type="gene ID" value="PMI2530"/>
</dbReference>
<dbReference type="GeneID" id="6801006"/>
<dbReference type="KEGG" id="pmr:PMI2530"/>
<dbReference type="eggNOG" id="COG0231">
    <property type="taxonomic scope" value="Bacteria"/>
</dbReference>
<dbReference type="HOGENOM" id="CLU_074944_0_0_6"/>
<dbReference type="UniPathway" id="UPA00345"/>
<dbReference type="Proteomes" id="UP000008319">
    <property type="component" value="Chromosome"/>
</dbReference>
<dbReference type="GO" id="GO:0005737">
    <property type="term" value="C:cytoplasm"/>
    <property type="evidence" value="ECO:0007669"/>
    <property type="project" value="UniProtKB-SubCell"/>
</dbReference>
<dbReference type="GO" id="GO:0003746">
    <property type="term" value="F:translation elongation factor activity"/>
    <property type="evidence" value="ECO:0007669"/>
    <property type="project" value="UniProtKB-UniRule"/>
</dbReference>
<dbReference type="GO" id="GO:0043043">
    <property type="term" value="P:peptide biosynthetic process"/>
    <property type="evidence" value="ECO:0007669"/>
    <property type="project" value="InterPro"/>
</dbReference>
<dbReference type="CDD" id="cd04470">
    <property type="entry name" value="S1_EF-P_repeat_1"/>
    <property type="match status" value="1"/>
</dbReference>
<dbReference type="CDD" id="cd05794">
    <property type="entry name" value="S1_EF-P_repeat_2"/>
    <property type="match status" value="1"/>
</dbReference>
<dbReference type="FunFam" id="2.30.30.30:FF:000003">
    <property type="entry name" value="Elongation factor P"/>
    <property type="match status" value="1"/>
</dbReference>
<dbReference type="FunFam" id="2.40.50.140:FF:000004">
    <property type="entry name" value="Elongation factor P"/>
    <property type="match status" value="1"/>
</dbReference>
<dbReference type="FunFam" id="2.40.50.140:FF:000009">
    <property type="entry name" value="Elongation factor P"/>
    <property type="match status" value="1"/>
</dbReference>
<dbReference type="Gene3D" id="2.30.30.30">
    <property type="match status" value="1"/>
</dbReference>
<dbReference type="Gene3D" id="2.40.50.140">
    <property type="entry name" value="Nucleic acid-binding proteins"/>
    <property type="match status" value="2"/>
</dbReference>
<dbReference type="HAMAP" id="MF_00141">
    <property type="entry name" value="EF_P"/>
    <property type="match status" value="1"/>
</dbReference>
<dbReference type="InterPro" id="IPR015365">
    <property type="entry name" value="Elong-fact-P_C"/>
</dbReference>
<dbReference type="InterPro" id="IPR012340">
    <property type="entry name" value="NA-bd_OB-fold"/>
</dbReference>
<dbReference type="InterPro" id="IPR014722">
    <property type="entry name" value="Rib_uL2_dom2"/>
</dbReference>
<dbReference type="InterPro" id="IPR020599">
    <property type="entry name" value="Transl_elong_fac_P/YeiP"/>
</dbReference>
<dbReference type="InterPro" id="IPR013185">
    <property type="entry name" value="Transl_elong_KOW-like"/>
</dbReference>
<dbReference type="InterPro" id="IPR001059">
    <property type="entry name" value="Transl_elong_P/YeiP_cen"/>
</dbReference>
<dbReference type="InterPro" id="IPR013852">
    <property type="entry name" value="Transl_elong_P/YeiP_CS"/>
</dbReference>
<dbReference type="InterPro" id="IPR011768">
    <property type="entry name" value="Transl_elongation_fac_P"/>
</dbReference>
<dbReference type="InterPro" id="IPR008991">
    <property type="entry name" value="Translation_prot_SH3-like_sf"/>
</dbReference>
<dbReference type="NCBIfam" id="TIGR00038">
    <property type="entry name" value="efp"/>
    <property type="match status" value="1"/>
</dbReference>
<dbReference type="NCBIfam" id="NF001810">
    <property type="entry name" value="PRK00529.1"/>
    <property type="match status" value="1"/>
</dbReference>
<dbReference type="PANTHER" id="PTHR30053">
    <property type="entry name" value="ELONGATION FACTOR P"/>
    <property type="match status" value="1"/>
</dbReference>
<dbReference type="PANTHER" id="PTHR30053:SF12">
    <property type="entry name" value="ELONGATION FACTOR P (EF-P) FAMILY PROTEIN"/>
    <property type="match status" value="1"/>
</dbReference>
<dbReference type="Pfam" id="PF01132">
    <property type="entry name" value="EFP"/>
    <property type="match status" value="1"/>
</dbReference>
<dbReference type="Pfam" id="PF08207">
    <property type="entry name" value="EFP_N"/>
    <property type="match status" value="1"/>
</dbReference>
<dbReference type="Pfam" id="PF09285">
    <property type="entry name" value="Elong-fact-P_C"/>
    <property type="match status" value="1"/>
</dbReference>
<dbReference type="PIRSF" id="PIRSF005901">
    <property type="entry name" value="EF-P"/>
    <property type="match status" value="1"/>
</dbReference>
<dbReference type="SMART" id="SM01185">
    <property type="entry name" value="EFP"/>
    <property type="match status" value="1"/>
</dbReference>
<dbReference type="SMART" id="SM00841">
    <property type="entry name" value="Elong-fact-P_C"/>
    <property type="match status" value="1"/>
</dbReference>
<dbReference type="SUPFAM" id="SSF50249">
    <property type="entry name" value="Nucleic acid-binding proteins"/>
    <property type="match status" value="2"/>
</dbReference>
<dbReference type="SUPFAM" id="SSF50104">
    <property type="entry name" value="Translation proteins SH3-like domain"/>
    <property type="match status" value="1"/>
</dbReference>
<dbReference type="PROSITE" id="PS01275">
    <property type="entry name" value="EFP"/>
    <property type="match status" value="1"/>
</dbReference>
<feature type="chain" id="PRO_1000096190" description="Elongation factor P">
    <location>
        <begin position="1"/>
        <end position="188"/>
    </location>
</feature>
<feature type="modified residue" description="N6-(3,6-diaminohexanoyl)-5-hydroxylysine" evidence="1">
    <location>
        <position position="34"/>
    </location>
</feature>
<evidence type="ECO:0000255" key="1">
    <source>
        <dbReference type="HAMAP-Rule" id="MF_00141"/>
    </source>
</evidence>
<gene>
    <name evidence="1" type="primary">efp</name>
    <name type="ordered locus">PMI2530</name>
</gene>
<sequence>MASYNTNDFRSGLKIMLDGEPAVITECEFVKPGKGQAFARVRLRKLISNKLLEKTFKSTDSAEGADVMDINLTYLYNDGEFWHFMNNETFEQLAADEKAVGENAKWLIDQAECIVTLWDNRPIAVVPPNFVELEIVDTDPGLKGDTAGTGGKPATLSTGAVVKVPLFVQIGEVIKVDTRSGEYVSRVK</sequence>
<reference key="1">
    <citation type="journal article" date="2008" name="J. Bacteriol.">
        <title>Complete genome sequence of uropathogenic Proteus mirabilis, a master of both adherence and motility.</title>
        <authorList>
            <person name="Pearson M.M."/>
            <person name="Sebaihia M."/>
            <person name="Churcher C."/>
            <person name="Quail M.A."/>
            <person name="Seshasayee A.S."/>
            <person name="Luscombe N.M."/>
            <person name="Abdellah Z."/>
            <person name="Arrosmith C."/>
            <person name="Atkin B."/>
            <person name="Chillingworth T."/>
            <person name="Hauser H."/>
            <person name="Jagels K."/>
            <person name="Moule S."/>
            <person name="Mungall K."/>
            <person name="Norbertczak H."/>
            <person name="Rabbinowitsch E."/>
            <person name="Walker D."/>
            <person name="Whithead S."/>
            <person name="Thomson N.R."/>
            <person name="Rather P.N."/>
            <person name="Parkhill J."/>
            <person name="Mobley H.L.T."/>
        </authorList>
    </citation>
    <scope>NUCLEOTIDE SEQUENCE [LARGE SCALE GENOMIC DNA]</scope>
    <source>
        <strain>HI4320</strain>
    </source>
</reference>